<proteinExistence type="evidence at transcript level"/>
<comment type="function">
    <text evidence="4">Broad-scope metal ion transporter with a preference for zinc uptake. Also mediates cellular uptake of nontransferrin-bound iron.</text>
</comment>
<comment type="function">
    <text evidence="2 4">Electroneutral transporter of the plasma membrane mediating the cellular uptake of the divalent metal cations zinc, manganese and iron that are important for tissue homeostasis, metabolism, development and immunity (PubMed:27231142). Functions as an energy-dependent symporter, transporting through the membranes an electroneutral complex composed of a divalent metal cation and two bicarbonate anions (By similarity). Beside these endogenous cellular substrates, can also import cadmium a non-essential metal which is cytotoxic and carcinogenic (By similarity).</text>
</comment>
<comment type="catalytic activity">
    <reaction evidence="2">
        <text>Zn(2+)(out) + 2 hydrogencarbonate(out) = Zn(2+)(in) + 2 hydrogencarbonate(in)</text>
        <dbReference type="Rhea" id="RHEA:62252"/>
        <dbReference type="ChEBI" id="CHEBI:17544"/>
        <dbReference type="ChEBI" id="CHEBI:29105"/>
    </reaction>
    <physiologicalReaction direction="left-to-right" evidence="2">
        <dbReference type="Rhea" id="RHEA:62253"/>
    </physiologicalReaction>
</comment>
<comment type="catalytic activity">
    <reaction evidence="2">
        <text>Mn(2+)(out) + 2 hydrogencarbonate(out) = Mn(2+)(in) + 2 hydrogencarbonate(in)</text>
        <dbReference type="Rhea" id="RHEA:62260"/>
        <dbReference type="ChEBI" id="CHEBI:17544"/>
        <dbReference type="ChEBI" id="CHEBI:29035"/>
    </reaction>
    <physiologicalReaction direction="left-to-right" evidence="2">
        <dbReference type="Rhea" id="RHEA:62261"/>
    </physiologicalReaction>
</comment>
<comment type="catalytic activity">
    <reaction evidence="2">
        <text>Fe(2+)(out) + 2 hydrogencarbonate(out) = Fe(2+)(in) + 2 hydrogencarbonate(in)</text>
        <dbReference type="Rhea" id="RHEA:62368"/>
        <dbReference type="ChEBI" id="CHEBI:17544"/>
        <dbReference type="ChEBI" id="CHEBI:29033"/>
    </reaction>
    <physiologicalReaction direction="left-to-right" evidence="2">
        <dbReference type="Rhea" id="RHEA:62369"/>
    </physiologicalReaction>
</comment>
<comment type="catalytic activity">
    <reaction evidence="2">
        <text>Cd(2+)(out) + 2 hydrogencarbonate(out) = Cd(2+)(in) + 2 hydrogencarbonate(in)</text>
        <dbReference type="Rhea" id="RHEA:62256"/>
        <dbReference type="ChEBI" id="CHEBI:17544"/>
        <dbReference type="ChEBI" id="CHEBI:48775"/>
    </reaction>
    <physiologicalReaction direction="left-to-right" evidence="2">
        <dbReference type="Rhea" id="RHEA:62257"/>
    </physiologicalReaction>
</comment>
<comment type="subunit">
    <text evidence="1">Homotrimer.</text>
</comment>
<comment type="subcellular location">
    <subcellularLocation>
        <location evidence="4">Cell membrane</location>
        <topology evidence="3">Multi-pass membrane protein</topology>
    </subcellularLocation>
    <subcellularLocation>
        <location evidence="1">Apical cell membrane</location>
        <topology evidence="3">Multi-pass membrane protein</topology>
    </subcellularLocation>
    <subcellularLocation>
        <location evidence="1">Basolateral cell membrane</location>
        <topology evidence="3">Multi-pass membrane protein</topology>
    </subcellularLocation>
    <subcellularLocation>
        <location evidence="1">Early endosome membrane</location>
        <topology evidence="3">Multi-pass membrane protein</topology>
    </subcellularLocation>
    <subcellularLocation>
        <location evidence="1">Late endosome membrane</location>
        <topology evidence="3">Multi-pass membrane protein</topology>
    </subcellularLocation>
    <subcellularLocation>
        <location evidence="1">Lysosome membrane</location>
        <topology evidence="3">Multi-pass membrane protein</topology>
    </subcellularLocation>
</comment>
<comment type="developmental stage">
    <text evidence="4">Expressed at all stages of embryonic and early larval development.</text>
</comment>
<comment type="disruption phenotype">
    <text evidence="4">Embryos with CRISPR-induced slc39a14 null mutations display altered manganese homeostasis. This is associated with manganese deposition in the brain and altered locomotor activity. Mutants survived into adulthood without any obvious morphological or developmental defects.</text>
</comment>
<comment type="similarity">
    <text evidence="6">Belongs to the ZIP transporter (TC 2.A.5) family.</text>
</comment>
<feature type="signal peptide" evidence="3">
    <location>
        <begin position="1"/>
        <end position="34"/>
    </location>
</feature>
<feature type="chain" id="PRO_5002547407" description="Metal cation symporter ZIP14" evidence="3">
    <location>
        <begin position="35"/>
        <end position="494"/>
    </location>
</feature>
<feature type="topological domain" description="Extracellular" evidence="6">
    <location>
        <begin position="35"/>
        <end position="152"/>
    </location>
</feature>
<feature type="transmembrane region" description="Helical" evidence="3">
    <location>
        <begin position="153"/>
        <end position="173"/>
    </location>
</feature>
<feature type="topological domain" description="Cytoplasmic" evidence="6">
    <location>
        <begin position="174"/>
        <end position="181"/>
    </location>
</feature>
<feature type="transmembrane region" description="Helical" evidence="3">
    <location>
        <begin position="182"/>
        <end position="202"/>
    </location>
</feature>
<feature type="topological domain" description="Extracellular" evidence="6">
    <location>
        <begin position="203"/>
        <end position="219"/>
    </location>
</feature>
<feature type="transmembrane region" description="Helical" evidence="3">
    <location>
        <begin position="220"/>
        <end position="240"/>
    </location>
</feature>
<feature type="topological domain" description="Cytoplasmic" evidence="6">
    <location>
        <begin position="241"/>
        <end position="397"/>
    </location>
</feature>
<feature type="transmembrane region" description="Helical" evidence="3">
    <location>
        <begin position="398"/>
        <end position="418"/>
    </location>
</feature>
<feature type="topological domain" description="Extracellular" evidence="6">
    <location>
        <begin position="419"/>
        <end position="426"/>
    </location>
</feature>
<feature type="transmembrane region" description="Helical" evidence="3">
    <location>
        <begin position="427"/>
        <end position="447"/>
    </location>
</feature>
<feature type="topological domain" description="Cytoplasmic" evidence="6">
    <location>
        <begin position="448"/>
        <end position="462"/>
    </location>
</feature>
<feature type="transmembrane region" description="Helical" evidence="3">
    <location>
        <begin position="463"/>
        <end position="483"/>
    </location>
</feature>
<feature type="topological domain" description="Extracellular" evidence="6">
    <location>
        <begin position="484"/>
        <end position="494"/>
    </location>
</feature>
<feature type="short sequence motif" description="HHHGHXHX-motif" evidence="1">
    <location>
        <begin position="248"/>
        <end position="255"/>
    </location>
</feature>
<feature type="short sequence motif" description="XEXPHE-motif" evidence="1">
    <location>
        <begin position="376"/>
        <end position="381"/>
    </location>
</feature>
<protein>
    <recommendedName>
        <fullName evidence="1">Metal cation symporter ZIP14</fullName>
    </recommendedName>
    <alternativeName>
        <fullName evidence="1">Solute carrier family 39 member 14</fullName>
    </alternativeName>
    <alternativeName>
        <fullName evidence="5">Zrt- and Irt-like protein 14</fullName>
        <shortName evidence="5">ZIP-14</shortName>
    </alternativeName>
</protein>
<accession>A0A0G2KQY6</accession>
<gene>
    <name evidence="5" type="primary">slc39a14</name>
    <name evidence="5" type="synonym">zip14</name>
</gene>
<reference key="1">
    <citation type="journal article" date="2013" name="Nature">
        <title>The zebrafish reference genome sequence and its relationship to the human genome.</title>
        <authorList>
            <person name="Howe K."/>
            <person name="Clark M.D."/>
            <person name="Torroja C.F."/>
            <person name="Torrance J."/>
            <person name="Berthelot C."/>
            <person name="Muffato M."/>
            <person name="Collins J.E."/>
            <person name="Humphray S."/>
            <person name="McLaren K."/>
            <person name="Matthews L."/>
            <person name="McLaren S."/>
            <person name="Sealy I."/>
            <person name="Caccamo M."/>
            <person name="Churcher C."/>
            <person name="Scott C."/>
            <person name="Barrett J.C."/>
            <person name="Koch R."/>
            <person name="Rauch G.J."/>
            <person name="White S."/>
            <person name="Chow W."/>
            <person name="Kilian B."/>
            <person name="Quintais L.T."/>
            <person name="Guerra-Assuncao J.A."/>
            <person name="Zhou Y."/>
            <person name="Gu Y."/>
            <person name="Yen J."/>
            <person name="Vogel J.H."/>
            <person name="Eyre T."/>
            <person name="Redmond S."/>
            <person name="Banerjee R."/>
            <person name="Chi J."/>
            <person name="Fu B."/>
            <person name="Langley E."/>
            <person name="Maguire S.F."/>
            <person name="Laird G.K."/>
            <person name="Lloyd D."/>
            <person name="Kenyon E."/>
            <person name="Donaldson S."/>
            <person name="Sehra H."/>
            <person name="Almeida-King J."/>
            <person name="Loveland J."/>
            <person name="Trevanion S."/>
            <person name="Jones M."/>
            <person name="Quail M."/>
            <person name="Willey D."/>
            <person name="Hunt A."/>
            <person name="Burton J."/>
            <person name="Sims S."/>
            <person name="McLay K."/>
            <person name="Plumb B."/>
            <person name="Davis J."/>
            <person name="Clee C."/>
            <person name="Oliver K."/>
            <person name="Clark R."/>
            <person name="Riddle C."/>
            <person name="Elliot D."/>
            <person name="Threadgold G."/>
            <person name="Harden G."/>
            <person name="Ware D."/>
            <person name="Begum S."/>
            <person name="Mortimore B."/>
            <person name="Kerry G."/>
            <person name="Heath P."/>
            <person name="Phillimore B."/>
            <person name="Tracey A."/>
            <person name="Corby N."/>
            <person name="Dunn M."/>
            <person name="Johnson C."/>
            <person name="Wood J."/>
            <person name="Clark S."/>
            <person name="Pelan S."/>
            <person name="Griffiths G."/>
            <person name="Smith M."/>
            <person name="Glithero R."/>
            <person name="Howden P."/>
            <person name="Barker N."/>
            <person name="Lloyd C."/>
            <person name="Stevens C."/>
            <person name="Harley J."/>
            <person name="Holt K."/>
            <person name="Panagiotidis G."/>
            <person name="Lovell J."/>
            <person name="Beasley H."/>
            <person name="Henderson C."/>
            <person name="Gordon D."/>
            <person name="Auger K."/>
            <person name="Wright D."/>
            <person name="Collins J."/>
            <person name="Raisen C."/>
            <person name="Dyer L."/>
            <person name="Leung K."/>
            <person name="Robertson L."/>
            <person name="Ambridge K."/>
            <person name="Leongamornlert D."/>
            <person name="McGuire S."/>
            <person name="Gilderthorp R."/>
            <person name="Griffiths C."/>
            <person name="Manthravadi D."/>
            <person name="Nichol S."/>
            <person name="Barker G."/>
            <person name="Whitehead S."/>
            <person name="Kay M."/>
            <person name="Brown J."/>
            <person name="Murnane C."/>
            <person name="Gray E."/>
            <person name="Humphries M."/>
            <person name="Sycamore N."/>
            <person name="Barker D."/>
            <person name="Saunders D."/>
            <person name="Wallis J."/>
            <person name="Babbage A."/>
            <person name="Hammond S."/>
            <person name="Mashreghi-Mohammadi M."/>
            <person name="Barr L."/>
            <person name="Martin S."/>
            <person name="Wray P."/>
            <person name="Ellington A."/>
            <person name="Matthews N."/>
            <person name="Ellwood M."/>
            <person name="Woodmansey R."/>
            <person name="Clark G."/>
            <person name="Cooper J."/>
            <person name="Tromans A."/>
            <person name="Grafham D."/>
            <person name="Skuce C."/>
            <person name="Pandian R."/>
            <person name="Andrews R."/>
            <person name="Harrison E."/>
            <person name="Kimberley A."/>
            <person name="Garnett J."/>
            <person name="Fosker N."/>
            <person name="Hall R."/>
            <person name="Garner P."/>
            <person name="Kelly D."/>
            <person name="Bird C."/>
            <person name="Palmer S."/>
            <person name="Gehring I."/>
            <person name="Berger A."/>
            <person name="Dooley C.M."/>
            <person name="Ersan-Urun Z."/>
            <person name="Eser C."/>
            <person name="Geiger H."/>
            <person name="Geisler M."/>
            <person name="Karotki L."/>
            <person name="Kirn A."/>
            <person name="Konantz J."/>
            <person name="Konantz M."/>
            <person name="Oberlander M."/>
            <person name="Rudolph-Geiger S."/>
            <person name="Teucke M."/>
            <person name="Lanz C."/>
            <person name="Raddatz G."/>
            <person name="Osoegawa K."/>
            <person name="Zhu B."/>
            <person name="Rapp A."/>
            <person name="Widaa S."/>
            <person name="Langford C."/>
            <person name="Yang F."/>
            <person name="Schuster S.C."/>
            <person name="Carter N.P."/>
            <person name="Harrow J."/>
            <person name="Ning Z."/>
            <person name="Herrero J."/>
            <person name="Searle S.M."/>
            <person name="Enright A."/>
            <person name="Geisler R."/>
            <person name="Plasterk R.H."/>
            <person name="Lee C."/>
            <person name="Westerfield M."/>
            <person name="de Jong P.J."/>
            <person name="Zon L.I."/>
            <person name="Postlethwait J.H."/>
            <person name="Nusslein-Volhard C."/>
            <person name="Hubbard T.J."/>
            <person name="Roest Crollius H."/>
            <person name="Rogers J."/>
            <person name="Stemple D.L."/>
        </authorList>
    </citation>
    <scope>NUCLEOTIDE SEQUENCE [LARGE SCALE GENOMIC DNA]</scope>
    <source>
        <strain>Tuebingen</strain>
    </source>
</reference>
<reference key="2">
    <citation type="journal article" date="2016" name="Nat. Commun.">
        <title>Mutations in SLC39A14 disrupt manganese homeostasis and cause childhood-onset parkinsonism-dystonia.</title>
        <authorList>
            <person name="Tuschl K."/>
            <person name="Meyer E."/>
            <person name="Valdivia L.E."/>
            <person name="Zhao N."/>
            <person name="Dadswell C."/>
            <person name="Abdul-Sada A."/>
            <person name="Hung C.Y."/>
            <person name="Simpson M.A."/>
            <person name="Chong W.K."/>
            <person name="Jacques T.S."/>
            <person name="Woltjer R.L."/>
            <person name="Eaton S."/>
            <person name="Gregory A."/>
            <person name="Sanford L."/>
            <person name="Kara E."/>
            <person name="Houlden H."/>
            <person name="Cuno S.M."/>
            <person name="Prokisch H."/>
            <person name="Valletta L."/>
            <person name="Tiranti V."/>
            <person name="Younis R."/>
            <person name="Maher E.R."/>
            <person name="Spencer J."/>
            <person name="Straatman-Iwanowska A."/>
            <person name="Gissen P."/>
            <person name="Selim L.A."/>
            <person name="Pintos-Morell G."/>
            <person name="Coroleu-Lletget W."/>
            <person name="Mohammad S.S."/>
            <person name="Yoganathan S."/>
            <person name="Dale R.C."/>
            <person name="Thomas M."/>
            <person name="Rihel J."/>
            <person name="Bodamer O.A."/>
            <person name="Enns C.A."/>
            <person name="Hayflick S.J."/>
            <person name="Clayton P.T."/>
            <person name="Mills P.B."/>
            <person name="Kurian M.A."/>
            <person name="Wilson S.W."/>
        </authorList>
    </citation>
    <scope>FUNCTION</scope>
    <scope>SUBCELLULAR LOCATION</scope>
    <scope>DISRUPTION PHENOTYPE</scope>
    <scope>DEVELOPMENTAL STAGE</scope>
</reference>
<sequence>MTLRRASGCRQLTLTIGLALTLGLLQWPIGDVRGQDGASPAQVLQELLTRYGDNASISVPQLRSLLVRLNGGQSEDHDSKTQPTRTNASKCLAADTLAVYGMSEQSRIDERGLQQICPTMIQQLDSQACKTQPNQESESSPRPTEAEVWGYGLLCVTVISLCSLVGASVVPFMRKTFYKRLLLYFIALAIGTLYSNALFQLIPEAFGFDPMEDYYVPKSAVVFGGFYLFFFTEKILKMILKPKDTGGHGHGHSHFPAERYANSNGDLEDGVMEKLQNGEAGGAALPRAEADGRGVGEDDKMLSTGQTVQDTQSSGGGGTGGCYWLKGRAYSDIGTLAWMITLSDGLHNFIDGLAIGASFTASVFQGISTSVAILCEEFPHELGDFVILLNAGMSIQQALFFNFLSACCCYLGMGFGILAGNNFSPNWIFALAGGMFLYIALADMFPEMNEVSREEEEAGGSGFLLTFALQNAGLLTGFAIMLVLTIYSGQIQLG</sequence>
<organism>
    <name type="scientific">Danio rerio</name>
    <name type="common">Zebrafish</name>
    <name type="synonym">Brachydanio rerio</name>
    <dbReference type="NCBI Taxonomy" id="7955"/>
    <lineage>
        <taxon>Eukaryota</taxon>
        <taxon>Metazoa</taxon>
        <taxon>Chordata</taxon>
        <taxon>Craniata</taxon>
        <taxon>Vertebrata</taxon>
        <taxon>Euteleostomi</taxon>
        <taxon>Actinopterygii</taxon>
        <taxon>Neopterygii</taxon>
        <taxon>Teleostei</taxon>
        <taxon>Ostariophysi</taxon>
        <taxon>Cypriniformes</taxon>
        <taxon>Danionidae</taxon>
        <taxon>Danioninae</taxon>
        <taxon>Danio</taxon>
    </lineage>
</organism>
<dbReference type="EMBL" id="CABZ01088693">
    <property type="status" value="NOT_ANNOTATED_CDS"/>
    <property type="molecule type" value="Genomic_DNA"/>
</dbReference>
<dbReference type="EMBL" id="CABZ01088694">
    <property type="status" value="NOT_ANNOTATED_CDS"/>
    <property type="molecule type" value="Genomic_DNA"/>
</dbReference>
<dbReference type="EMBL" id="CABZ01088695">
    <property type="status" value="NOT_ANNOTATED_CDS"/>
    <property type="molecule type" value="Genomic_DNA"/>
</dbReference>
<dbReference type="EMBL" id="CABZ01088696">
    <property type="status" value="NOT_ANNOTATED_CDS"/>
    <property type="molecule type" value="Genomic_DNA"/>
</dbReference>
<dbReference type="EMBL" id="CABZ01088697">
    <property type="status" value="NOT_ANNOTATED_CDS"/>
    <property type="molecule type" value="Genomic_DNA"/>
</dbReference>
<dbReference type="EMBL" id="CABZ01088698">
    <property type="status" value="NOT_ANNOTATED_CDS"/>
    <property type="molecule type" value="Genomic_DNA"/>
</dbReference>
<dbReference type="RefSeq" id="NP_001313628.1">
    <property type="nucleotide sequence ID" value="NM_001326699.1"/>
</dbReference>
<dbReference type="RefSeq" id="XP_021332011.1">
    <property type="nucleotide sequence ID" value="XM_021476336.2"/>
</dbReference>
<dbReference type="SMR" id="A0A0G2KQY6"/>
<dbReference type="FunCoup" id="A0A0G2KQY6">
    <property type="interactions" value="143"/>
</dbReference>
<dbReference type="STRING" id="7955.ENSDARP00000134809"/>
<dbReference type="Ensembl" id="ENSDART00000163942">
    <property type="protein sequence ID" value="ENSDARP00000134809"/>
    <property type="gene ID" value="ENSDARG00000102387"/>
</dbReference>
<dbReference type="Ensembl" id="ENSDART00000185624">
    <property type="protein sequence ID" value="ENSDARP00000156772"/>
    <property type="gene ID" value="ENSDARG00000102387"/>
</dbReference>
<dbReference type="GeneID" id="799782"/>
<dbReference type="KEGG" id="dre:799782"/>
<dbReference type="AGR" id="ZFIN:ZDB-GENE-060315-2"/>
<dbReference type="CTD" id="23516"/>
<dbReference type="ZFIN" id="ZDB-GENE-060315-2">
    <property type="gene designation" value="slc39a14"/>
</dbReference>
<dbReference type="InParanoid" id="A0A0G2KQY6"/>
<dbReference type="OrthoDB" id="200954at2759"/>
<dbReference type="Reactome" id="R-DRE-442380">
    <property type="pathway name" value="Zinc influx into cells by the SLC39 gene family"/>
</dbReference>
<dbReference type="PRO" id="PR:A0A0G2KQY6"/>
<dbReference type="Proteomes" id="UP000000437">
    <property type="component" value="Chromosome 5"/>
</dbReference>
<dbReference type="Bgee" id="ENSDARG00000102387">
    <property type="expression patterns" value="Expressed in proximal tubule and 32 other cell types or tissues"/>
</dbReference>
<dbReference type="ExpressionAtlas" id="A0A0G2KQY6">
    <property type="expression patterns" value="baseline and differential"/>
</dbReference>
<dbReference type="GO" id="GO:0016324">
    <property type="term" value="C:apical plasma membrane"/>
    <property type="evidence" value="ECO:0000250"/>
    <property type="project" value="UniProtKB"/>
</dbReference>
<dbReference type="GO" id="GO:0016323">
    <property type="term" value="C:basolateral plasma membrane"/>
    <property type="evidence" value="ECO:0000250"/>
    <property type="project" value="UniProtKB"/>
</dbReference>
<dbReference type="GO" id="GO:0031901">
    <property type="term" value="C:early endosome membrane"/>
    <property type="evidence" value="ECO:0000250"/>
    <property type="project" value="UniProtKB"/>
</dbReference>
<dbReference type="GO" id="GO:0031902">
    <property type="term" value="C:late endosome membrane"/>
    <property type="evidence" value="ECO:0000250"/>
    <property type="project" value="UniProtKB"/>
</dbReference>
<dbReference type="GO" id="GO:0005765">
    <property type="term" value="C:lysosomal membrane"/>
    <property type="evidence" value="ECO:0000250"/>
    <property type="project" value="UniProtKB"/>
</dbReference>
<dbReference type="GO" id="GO:0005886">
    <property type="term" value="C:plasma membrane"/>
    <property type="evidence" value="ECO:0000314"/>
    <property type="project" value="UniProtKB"/>
</dbReference>
<dbReference type="GO" id="GO:0015086">
    <property type="term" value="F:cadmium ion transmembrane transporter activity"/>
    <property type="evidence" value="ECO:0000250"/>
    <property type="project" value="UniProtKB"/>
</dbReference>
<dbReference type="GO" id="GO:0005381">
    <property type="term" value="F:iron ion transmembrane transporter activity"/>
    <property type="evidence" value="ECO:0000250"/>
    <property type="project" value="UniProtKB"/>
</dbReference>
<dbReference type="GO" id="GO:0005384">
    <property type="term" value="F:manganese ion transmembrane transporter activity"/>
    <property type="evidence" value="ECO:0000250"/>
    <property type="project" value="UniProtKB"/>
</dbReference>
<dbReference type="GO" id="GO:0015296">
    <property type="term" value="F:monoatomic anion:monoatomic cation symporter activity"/>
    <property type="evidence" value="ECO:0000250"/>
    <property type="project" value="UniProtKB"/>
</dbReference>
<dbReference type="GO" id="GO:0140410">
    <property type="term" value="F:monoatomic cation:bicarbonate symporter activity"/>
    <property type="evidence" value="ECO:0000318"/>
    <property type="project" value="GO_Central"/>
</dbReference>
<dbReference type="GO" id="GO:0005385">
    <property type="term" value="F:zinc ion transmembrane transporter activity"/>
    <property type="evidence" value="ECO:0000250"/>
    <property type="project" value="UniProtKB"/>
</dbReference>
<dbReference type="GO" id="GO:0071333">
    <property type="term" value="P:cellular response to glucose stimulus"/>
    <property type="evidence" value="ECO:0000250"/>
    <property type="project" value="UniProtKB"/>
</dbReference>
<dbReference type="GO" id="GO:0032869">
    <property type="term" value="P:cellular response to insulin stimulus"/>
    <property type="evidence" value="ECO:0000250"/>
    <property type="project" value="UniProtKB"/>
</dbReference>
<dbReference type="GO" id="GO:0098739">
    <property type="term" value="P:import across plasma membrane"/>
    <property type="evidence" value="ECO:0000250"/>
    <property type="project" value="UniProtKB"/>
</dbReference>
<dbReference type="GO" id="GO:0098662">
    <property type="term" value="P:inorganic cation transmembrane transport"/>
    <property type="evidence" value="ECO:0000250"/>
    <property type="project" value="UniProtKB"/>
</dbReference>
<dbReference type="GO" id="GO:0030003">
    <property type="term" value="P:intracellular monoatomic cation homeostasis"/>
    <property type="evidence" value="ECO:0000318"/>
    <property type="project" value="GO_Central"/>
</dbReference>
<dbReference type="GO" id="GO:0006882">
    <property type="term" value="P:intracellular zinc ion homeostasis"/>
    <property type="evidence" value="ECO:0000250"/>
    <property type="project" value="UniProtKB"/>
</dbReference>
<dbReference type="GO" id="GO:0033212">
    <property type="term" value="P:iron import into cell"/>
    <property type="evidence" value="ECO:0000250"/>
    <property type="project" value="UniProtKB"/>
</dbReference>
<dbReference type="GO" id="GO:0034755">
    <property type="term" value="P:iron ion transmembrane transport"/>
    <property type="evidence" value="ECO:0000250"/>
    <property type="project" value="UniProtKB"/>
</dbReference>
<dbReference type="GO" id="GO:0055071">
    <property type="term" value="P:manganese ion homeostasis"/>
    <property type="evidence" value="ECO:0000315"/>
    <property type="project" value="ZFIN"/>
</dbReference>
<dbReference type="GO" id="GO:0071421">
    <property type="term" value="P:manganese ion transmembrane transport"/>
    <property type="evidence" value="ECO:0000250"/>
    <property type="project" value="UniProtKB"/>
</dbReference>
<dbReference type="GO" id="GO:0045745">
    <property type="term" value="P:positive regulation of G protein-coupled receptor signaling pathway"/>
    <property type="evidence" value="ECO:0000250"/>
    <property type="project" value="UniProtKB"/>
</dbReference>
<dbReference type="GO" id="GO:0071578">
    <property type="term" value="P:zinc ion import across plasma membrane"/>
    <property type="evidence" value="ECO:0000250"/>
    <property type="project" value="UniProtKB"/>
</dbReference>
<dbReference type="GO" id="GO:0071577">
    <property type="term" value="P:zinc ion transmembrane transport"/>
    <property type="evidence" value="ECO:0000250"/>
    <property type="project" value="UniProtKB"/>
</dbReference>
<dbReference type="GO" id="GO:0006829">
    <property type="term" value="P:zinc ion transport"/>
    <property type="evidence" value="ECO:0000250"/>
    <property type="project" value="ZFIN"/>
</dbReference>
<dbReference type="InterPro" id="IPR003689">
    <property type="entry name" value="ZIP"/>
</dbReference>
<dbReference type="InterPro" id="IPR050799">
    <property type="entry name" value="ZIP_Transporter"/>
</dbReference>
<dbReference type="PANTHER" id="PTHR12191:SF5">
    <property type="entry name" value="METAL CATION SYMPORTER ZIP14"/>
    <property type="match status" value="1"/>
</dbReference>
<dbReference type="PANTHER" id="PTHR12191">
    <property type="entry name" value="SOLUTE CARRIER FAMILY 39"/>
    <property type="match status" value="1"/>
</dbReference>
<dbReference type="Pfam" id="PF02535">
    <property type="entry name" value="Zip"/>
    <property type="match status" value="1"/>
</dbReference>
<keyword id="KW-1003">Cell membrane</keyword>
<keyword id="KW-0967">Endosome</keyword>
<keyword id="KW-0406">Ion transport</keyword>
<keyword id="KW-0458">Lysosome</keyword>
<keyword id="KW-0472">Membrane</keyword>
<keyword id="KW-1185">Reference proteome</keyword>
<keyword id="KW-0732">Signal</keyword>
<keyword id="KW-0812">Transmembrane</keyword>
<keyword id="KW-1133">Transmembrane helix</keyword>
<keyword id="KW-0813">Transport</keyword>
<keyword id="KW-0862">Zinc</keyword>
<keyword id="KW-0864">Zinc transport</keyword>
<name>S39AE_DANRE</name>
<evidence type="ECO:0000250" key="1">
    <source>
        <dbReference type="UniProtKB" id="Q15043"/>
    </source>
</evidence>
<evidence type="ECO:0000250" key="2">
    <source>
        <dbReference type="UniProtKB" id="Q75N73"/>
    </source>
</evidence>
<evidence type="ECO:0000255" key="3"/>
<evidence type="ECO:0000269" key="4">
    <source>
    </source>
</evidence>
<evidence type="ECO:0000303" key="5">
    <source>
    </source>
</evidence>
<evidence type="ECO:0000305" key="6"/>